<name>ARF1_PLAFA</name>
<evidence type="ECO:0000250" key="1">
    <source>
        <dbReference type="UniProtKB" id="P84077"/>
    </source>
</evidence>
<evidence type="ECO:0000250" key="2">
    <source>
        <dbReference type="UniProtKB" id="P84080"/>
    </source>
</evidence>
<evidence type="ECO:0000250" key="3">
    <source>
        <dbReference type="UniProtKB" id="Q7KQL3"/>
    </source>
</evidence>
<evidence type="ECO:0000269" key="4">
    <source>
    </source>
</evidence>
<evidence type="ECO:0000269" key="5">
    <source>
    </source>
</evidence>
<evidence type="ECO:0000305" key="6"/>
<accession>Q94650</accession>
<accession>O02502</accession>
<accession>O02593</accession>
<protein>
    <recommendedName>
        <fullName>ADP-ribosylation factor 1</fullName>
        <shortName>plARF</shortName>
        <ecNumber evidence="3">3.6.5.2</ecNumber>
    </recommendedName>
</protein>
<reference key="1">
    <citation type="journal article" date="1996" name="Eur. J. Biochem.">
        <title>Isolation, expression and characterization of the gene for an ADP-ribosylation factor from the human malaria parasite, Plasmodium falciparum.</title>
        <authorList>
            <person name="Stafford W.H."/>
            <person name="Stockley R.W."/>
            <person name="Ludbrook S.B."/>
            <person name="Holder A.A."/>
        </authorList>
    </citation>
    <scope>NUCLEOTIDE SEQUENCE [GENOMIC DNA]</scope>
    <scope>GTP-BINDING</scope>
    <scope>ACTIVITY REGULATION</scope>
    <scope>DEVELOPMENTAL STAGE</scope>
    <source>
        <strain>T9/96</strain>
        <tissue>Blood</tissue>
    </source>
</reference>
<reference key="2">
    <citation type="journal article" date="1997" name="Mol. Biochem. Parasitol.">
        <title>Cloning and characterization of Plasmodium falciparum ADP-ribosylation factor and factor-like genes.</title>
        <authorList>
            <person name="Truong R.M."/>
            <person name="Francis S.E."/>
            <person name="Chakrabarti D."/>
            <person name="Goldberg D.E."/>
        </authorList>
    </citation>
    <scope>NUCLEOTIDE SEQUENCE [MRNA]</scope>
    <scope>DEVELOPMENTAL STAGE</scope>
</reference>
<organism>
    <name type="scientific">Plasmodium falciparum</name>
    <dbReference type="NCBI Taxonomy" id="5833"/>
    <lineage>
        <taxon>Eukaryota</taxon>
        <taxon>Sar</taxon>
        <taxon>Alveolata</taxon>
        <taxon>Apicomplexa</taxon>
        <taxon>Aconoidasida</taxon>
        <taxon>Haemosporida</taxon>
        <taxon>Plasmodiidae</taxon>
        <taxon>Plasmodium</taxon>
        <taxon>Plasmodium (Laverania)</taxon>
    </lineage>
</organism>
<gene>
    <name type="primary">ARF1</name>
    <name type="synonym">ARF</name>
</gene>
<feature type="initiator methionine" description="Removed" evidence="1">
    <location>
        <position position="1"/>
    </location>
</feature>
<feature type="chain" id="PRO_0000207447" description="ADP-ribosylation factor 1">
    <location>
        <begin position="2"/>
        <end position="181"/>
    </location>
</feature>
<feature type="binding site" evidence="3">
    <location>
        <begin position="24"/>
        <end position="31"/>
    </location>
    <ligand>
        <name>GTP</name>
        <dbReference type="ChEBI" id="CHEBI:37565"/>
    </ligand>
</feature>
<feature type="binding site" evidence="3">
    <location>
        <begin position="126"/>
        <end position="129"/>
    </location>
    <ligand>
        <name>GTP</name>
        <dbReference type="ChEBI" id="CHEBI:37565"/>
    </ligand>
</feature>
<feature type="binding site" evidence="3">
    <location>
        <position position="160"/>
    </location>
    <ligand>
        <name>GTP</name>
        <dbReference type="ChEBI" id="CHEBI:37565"/>
    </ligand>
</feature>
<feature type="lipid moiety-binding region" description="N-myristoyl glycine" evidence="1">
    <location>
        <position position="2"/>
    </location>
</feature>
<comment type="function">
    <text evidence="1 3">Small GTPase involved in protein trafficking between different compartments (By similarity). Modulates vesicle budding and uncoating within the Golgi complex. In its GTP-bound form, triggers the recruitment of coatomer proteins to the Golgi membrane. The hydrolysis of ARF1-bound GTP, which is mediated by ARFGAPs proteins, is required for dissociation of coat proteins from Golgi membranes and vesicles (By similarity). Regulates the transport of N-acylated AK2 to the parasitophorous vacuole membrane. May be involved in the activation of lipid kinase PIP5K (By similarity).</text>
</comment>
<comment type="catalytic activity">
    <reaction evidence="3">
        <text>GTP + H2O = GDP + phosphate + H(+)</text>
        <dbReference type="Rhea" id="RHEA:19669"/>
        <dbReference type="ChEBI" id="CHEBI:15377"/>
        <dbReference type="ChEBI" id="CHEBI:15378"/>
        <dbReference type="ChEBI" id="CHEBI:37565"/>
        <dbReference type="ChEBI" id="CHEBI:43474"/>
        <dbReference type="ChEBI" id="CHEBI:58189"/>
        <dbReference type="EC" id="3.6.5.2"/>
    </reaction>
</comment>
<comment type="activity regulation">
    <text evidence="3 4">Alternates between an inactive GDP-bound form and an active GTP-bound form (By similarity). Intrinsic GTPase activity is almost undetectable in vitro (PubMed:8954160). Activated by a guanine nucleotide-exchange factor (GEF) and inactivated by GTPase-activating protein ARFGAP1 (By similarity).</text>
</comment>
<comment type="subunit">
    <text evidence="3">May interact with GTPase RAB5b.</text>
</comment>
<comment type="subcellular location">
    <subcellularLocation>
        <location evidence="3">Golgi apparatus membrane</location>
        <topology evidence="1">Lipid-anchor</topology>
        <orientation evidence="3">Cytoplasmic side</orientation>
    </subcellularLocation>
    <text evidence="2">In the GDP-bound form, associates transiently with the membranes via its myristoylated N-terminus where guanine nucleotide-exchange factor (GEF)-mediated nucleotide exchange occurs. Following nucleotide exchange, the GTP-bound form undergoes a conformational change, leading to the exposure of a myristoylated N-terminal amphipathic helix that provides stable membrane anchorage.</text>
</comment>
<comment type="developmental stage">
    <text evidence="4 5">Developmentally regulated and reaches a maximum at or just after nuclear division (at 30 - 36h) when the daughter parasites produced by asexual reproduction are segregating to become individual merozoites. The levels drop dramatically at 36 - 42h and remain low through the rest of the life cycle. Detected in the schizont stage. Increased expression may correlate with postmitotic nuclear vesicle fusion.</text>
</comment>
<comment type="similarity">
    <text evidence="6">Belongs to the small GTPase superfamily. Arf family.</text>
</comment>
<sequence length="181" mass="20912">MGLYVSRLFNRLFQKKDVRILMVGLDAAGKTTILYKVKLGEVVTTIPTIGFNVETVEFRNISFTVWDVGGQDKIRPLWRHYYSNTDGLIFVVDSNDRERIDDAREELHRMINEEELKDAIILVFANKQDLPNAMSAAEVTEKLHLNTIRERNWFIQSTCATRGDGLYEGFDWLTTHLNNAK</sequence>
<keyword id="KW-0931">ER-Golgi transport</keyword>
<keyword id="KW-0333">Golgi apparatus</keyword>
<keyword id="KW-0342">GTP-binding</keyword>
<keyword id="KW-0378">Hydrolase</keyword>
<keyword id="KW-0449">Lipoprotein</keyword>
<keyword id="KW-0472">Membrane</keyword>
<keyword id="KW-0519">Myristate</keyword>
<keyword id="KW-0547">Nucleotide-binding</keyword>
<keyword id="KW-0653">Protein transport</keyword>
<keyword id="KW-0813">Transport</keyword>
<dbReference type="EC" id="3.6.5.2" evidence="3"/>
<dbReference type="EMBL" id="Z80359">
    <property type="protein sequence ID" value="CAB02498.1"/>
    <property type="molecule type" value="Genomic_DNA"/>
</dbReference>
<dbReference type="EMBL" id="U57370">
    <property type="protein sequence ID" value="AAB63304.1"/>
    <property type="molecule type" value="mRNA"/>
</dbReference>
<dbReference type="SMR" id="Q94650"/>
<dbReference type="EnsemblProtists" id="CZT98464">
    <property type="protein sequence ID" value="CZT98464"/>
    <property type="gene ID" value="PF3D7_1020900"/>
</dbReference>
<dbReference type="VEuPathDB" id="PlasmoDB:PF3D7_1020900"/>
<dbReference type="VEuPathDB" id="PlasmoDB:Pf7G8-2_000306500"/>
<dbReference type="VEuPathDB" id="PlasmoDB:Pf7G8_100025400"/>
<dbReference type="VEuPathDB" id="PlasmoDB:PfCD01_100026200"/>
<dbReference type="VEuPathDB" id="PlasmoDB:PfDd2_100026300"/>
<dbReference type="VEuPathDB" id="PlasmoDB:PfGA01_100026300"/>
<dbReference type="VEuPathDB" id="PlasmoDB:PfGB4_100026000"/>
<dbReference type="VEuPathDB" id="PlasmoDB:PfGN01_100026500"/>
<dbReference type="VEuPathDB" id="PlasmoDB:PfHB3_100025400"/>
<dbReference type="VEuPathDB" id="PlasmoDB:PfIT_100025000"/>
<dbReference type="VEuPathDB" id="PlasmoDB:PfKE01_100026300"/>
<dbReference type="VEuPathDB" id="PlasmoDB:PfKH01_100025500"/>
<dbReference type="VEuPathDB" id="PlasmoDB:PfKH02_100026400"/>
<dbReference type="VEuPathDB" id="PlasmoDB:PfML01_100025200"/>
<dbReference type="VEuPathDB" id="PlasmoDB:PfNF135_100026200"/>
<dbReference type="VEuPathDB" id="PlasmoDB:PfNF166_100025800"/>
<dbReference type="VEuPathDB" id="PlasmoDB:PfNF54_100026000"/>
<dbReference type="VEuPathDB" id="PlasmoDB:PfSD01_100025600"/>
<dbReference type="VEuPathDB" id="PlasmoDB:PfSN01_100026400"/>
<dbReference type="VEuPathDB" id="PlasmoDB:PfTG01_100026300"/>
<dbReference type="OMA" id="HYYANTN"/>
<dbReference type="GO" id="GO:0000139">
    <property type="term" value="C:Golgi membrane"/>
    <property type="evidence" value="ECO:0007669"/>
    <property type="project" value="UniProtKB-SubCell"/>
</dbReference>
<dbReference type="GO" id="GO:0005525">
    <property type="term" value="F:GTP binding"/>
    <property type="evidence" value="ECO:0007669"/>
    <property type="project" value="UniProtKB-KW"/>
</dbReference>
<dbReference type="GO" id="GO:0003924">
    <property type="term" value="F:GTPase activity"/>
    <property type="evidence" value="ECO:0007669"/>
    <property type="project" value="InterPro"/>
</dbReference>
<dbReference type="GO" id="GO:0015031">
    <property type="term" value="P:protein transport"/>
    <property type="evidence" value="ECO:0007669"/>
    <property type="project" value="UniProtKB-KW"/>
</dbReference>
<dbReference type="GO" id="GO:0016192">
    <property type="term" value="P:vesicle-mediated transport"/>
    <property type="evidence" value="ECO:0007669"/>
    <property type="project" value="UniProtKB-KW"/>
</dbReference>
<dbReference type="CDD" id="cd04150">
    <property type="entry name" value="Arf1_5_like"/>
    <property type="match status" value="1"/>
</dbReference>
<dbReference type="FunFam" id="3.40.50.300:FF:000024">
    <property type="entry name" value="ADP-ribosylation factor 1"/>
    <property type="match status" value="1"/>
</dbReference>
<dbReference type="Gene3D" id="3.40.50.300">
    <property type="entry name" value="P-loop containing nucleotide triphosphate hydrolases"/>
    <property type="match status" value="1"/>
</dbReference>
<dbReference type="InterPro" id="IPR045872">
    <property type="entry name" value="Arf1-5-like"/>
</dbReference>
<dbReference type="InterPro" id="IPR027417">
    <property type="entry name" value="P-loop_NTPase"/>
</dbReference>
<dbReference type="InterPro" id="IPR005225">
    <property type="entry name" value="Small_GTP-bd"/>
</dbReference>
<dbReference type="InterPro" id="IPR024156">
    <property type="entry name" value="Small_GTPase_ARF"/>
</dbReference>
<dbReference type="InterPro" id="IPR006689">
    <property type="entry name" value="Small_GTPase_ARF/SAR"/>
</dbReference>
<dbReference type="NCBIfam" id="TIGR00231">
    <property type="entry name" value="small_GTP"/>
    <property type="match status" value="1"/>
</dbReference>
<dbReference type="PANTHER" id="PTHR11711">
    <property type="entry name" value="ADP RIBOSYLATION FACTOR-RELATED"/>
    <property type="match status" value="1"/>
</dbReference>
<dbReference type="Pfam" id="PF00025">
    <property type="entry name" value="Arf"/>
    <property type="match status" value="1"/>
</dbReference>
<dbReference type="PRINTS" id="PR00328">
    <property type="entry name" value="SAR1GTPBP"/>
</dbReference>
<dbReference type="SMART" id="SM00177">
    <property type="entry name" value="ARF"/>
    <property type="match status" value="1"/>
</dbReference>
<dbReference type="SMART" id="SM00175">
    <property type="entry name" value="RAB"/>
    <property type="match status" value="1"/>
</dbReference>
<dbReference type="SMART" id="SM00178">
    <property type="entry name" value="SAR"/>
    <property type="match status" value="1"/>
</dbReference>
<dbReference type="SUPFAM" id="SSF52540">
    <property type="entry name" value="P-loop containing nucleoside triphosphate hydrolases"/>
    <property type="match status" value="1"/>
</dbReference>
<dbReference type="PROSITE" id="PS51417">
    <property type="entry name" value="ARF"/>
    <property type="match status" value="1"/>
</dbReference>
<proteinExistence type="evidence at protein level"/>